<accession>Q8TAQ5</accession>
<accession>B2RDY6</accession>
<accession>Q96ML5</accession>
<reference key="1">
    <citation type="journal article" date="2004" name="Nat. Genet.">
        <title>Complete sequencing and characterization of 21,243 full-length human cDNAs.</title>
        <authorList>
            <person name="Ota T."/>
            <person name="Suzuki Y."/>
            <person name="Nishikawa T."/>
            <person name="Otsuki T."/>
            <person name="Sugiyama T."/>
            <person name="Irie R."/>
            <person name="Wakamatsu A."/>
            <person name="Hayashi K."/>
            <person name="Sato H."/>
            <person name="Nagai K."/>
            <person name="Kimura K."/>
            <person name="Makita H."/>
            <person name="Sekine M."/>
            <person name="Obayashi M."/>
            <person name="Nishi T."/>
            <person name="Shibahara T."/>
            <person name="Tanaka T."/>
            <person name="Ishii S."/>
            <person name="Yamamoto J."/>
            <person name="Saito K."/>
            <person name="Kawai Y."/>
            <person name="Isono Y."/>
            <person name="Nakamura Y."/>
            <person name="Nagahari K."/>
            <person name="Murakami K."/>
            <person name="Yasuda T."/>
            <person name="Iwayanagi T."/>
            <person name="Wagatsuma M."/>
            <person name="Shiratori A."/>
            <person name="Sudo H."/>
            <person name="Hosoiri T."/>
            <person name="Kaku Y."/>
            <person name="Kodaira H."/>
            <person name="Kondo H."/>
            <person name="Sugawara M."/>
            <person name="Takahashi M."/>
            <person name="Kanda K."/>
            <person name="Yokoi T."/>
            <person name="Furuya T."/>
            <person name="Kikkawa E."/>
            <person name="Omura Y."/>
            <person name="Abe K."/>
            <person name="Kamihara K."/>
            <person name="Katsuta N."/>
            <person name="Sato K."/>
            <person name="Tanikawa M."/>
            <person name="Yamazaki M."/>
            <person name="Ninomiya K."/>
            <person name="Ishibashi T."/>
            <person name="Yamashita H."/>
            <person name="Murakawa K."/>
            <person name="Fujimori K."/>
            <person name="Tanai H."/>
            <person name="Kimata M."/>
            <person name="Watanabe M."/>
            <person name="Hiraoka S."/>
            <person name="Chiba Y."/>
            <person name="Ishida S."/>
            <person name="Ono Y."/>
            <person name="Takiguchi S."/>
            <person name="Watanabe S."/>
            <person name="Yosida M."/>
            <person name="Hotuta T."/>
            <person name="Kusano J."/>
            <person name="Kanehori K."/>
            <person name="Takahashi-Fujii A."/>
            <person name="Hara H."/>
            <person name="Tanase T.-O."/>
            <person name="Nomura Y."/>
            <person name="Togiya S."/>
            <person name="Komai F."/>
            <person name="Hara R."/>
            <person name="Takeuchi K."/>
            <person name="Arita M."/>
            <person name="Imose N."/>
            <person name="Musashino K."/>
            <person name="Yuuki H."/>
            <person name="Oshima A."/>
            <person name="Sasaki N."/>
            <person name="Aotsuka S."/>
            <person name="Yoshikawa Y."/>
            <person name="Matsunawa H."/>
            <person name="Ichihara T."/>
            <person name="Shiohata N."/>
            <person name="Sano S."/>
            <person name="Moriya S."/>
            <person name="Momiyama H."/>
            <person name="Satoh N."/>
            <person name="Takami S."/>
            <person name="Terashima Y."/>
            <person name="Suzuki O."/>
            <person name="Nakagawa S."/>
            <person name="Senoh A."/>
            <person name="Mizoguchi H."/>
            <person name="Goto Y."/>
            <person name="Shimizu F."/>
            <person name="Wakebe H."/>
            <person name="Hishigaki H."/>
            <person name="Watanabe T."/>
            <person name="Sugiyama A."/>
            <person name="Takemoto M."/>
            <person name="Kawakami B."/>
            <person name="Yamazaki M."/>
            <person name="Watanabe K."/>
            <person name="Kumagai A."/>
            <person name="Itakura S."/>
            <person name="Fukuzumi Y."/>
            <person name="Fujimori Y."/>
            <person name="Komiyama M."/>
            <person name="Tashiro H."/>
            <person name="Tanigami A."/>
            <person name="Fujiwara T."/>
            <person name="Ono T."/>
            <person name="Yamada K."/>
            <person name="Fujii Y."/>
            <person name="Ozaki K."/>
            <person name="Hirao M."/>
            <person name="Ohmori Y."/>
            <person name="Kawabata A."/>
            <person name="Hikiji T."/>
            <person name="Kobatake N."/>
            <person name="Inagaki H."/>
            <person name="Ikema Y."/>
            <person name="Okamoto S."/>
            <person name="Okitani R."/>
            <person name="Kawakami T."/>
            <person name="Noguchi S."/>
            <person name="Itoh T."/>
            <person name="Shigeta K."/>
            <person name="Senba T."/>
            <person name="Matsumura K."/>
            <person name="Nakajima Y."/>
            <person name="Mizuno T."/>
            <person name="Morinaga M."/>
            <person name="Sasaki M."/>
            <person name="Togashi T."/>
            <person name="Oyama M."/>
            <person name="Hata H."/>
            <person name="Watanabe M."/>
            <person name="Komatsu T."/>
            <person name="Mizushima-Sugano J."/>
            <person name="Satoh T."/>
            <person name="Shirai Y."/>
            <person name="Takahashi Y."/>
            <person name="Nakagawa K."/>
            <person name="Okumura K."/>
            <person name="Nagase T."/>
            <person name="Nomura N."/>
            <person name="Kikuchi H."/>
            <person name="Masuho Y."/>
            <person name="Yamashita R."/>
            <person name="Nakai K."/>
            <person name="Yada T."/>
            <person name="Nakamura Y."/>
            <person name="Ohara O."/>
            <person name="Isogai T."/>
            <person name="Sugano S."/>
        </authorList>
    </citation>
    <scope>NUCLEOTIDE SEQUENCE [LARGE SCALE MRNA] (ISOFORMS 1 AND 2)</scope>
    <source>
        <tissue>Placenta</tissue>
        <tissue>Testis</tissue>
    </source>
</reference>
<reference key="2">
    <citation type="journal article" date="2004" name="Nature">
        <title>The DNA sequence and biology of human chromosome 19.</title>
        <authorList>
            <person name="Grimwood J."/>
            <person name="Gordon L.A."/>
            <person name="Olsen A.S."/>
            <person name="Terry A."/>
            <person name="Schmutz J."/>
            <person name="Lamerdin J.E."/>
            <person name="Hellsten U."/>
            <person name="Goodstein D."/>
            <person name="Couronne O."/>
            <person name="Tran-Gyamfi M."/>
            <person name="Aerts A."/>
            <person name="Altherr M."/>
            <person name="Ashworth L."/>
            <person name="Bajorek E."/>
            <person name="Black S."/>
            <person name="Branscomb E."/>
            <person name="Caenepeel S."/>
            <person name="Carrano A.V."/>
            <person name="Caoile C."/>
            <person name="Chan Y.M."/>
            <person name="Christensen M."/>
            <person name="Cleland C.A."/>
            <person name="Copeland A."/>
            <person name="Dalin E."/>
            <person name="Dehal P."/>
            <person name="Denys M."/>
            <person name="Detter J.C."/>
            <person name="Escobar J."/>
            <person name="Flowers D."/>
            <person name="Fotopulos D."/>
            <person name="Garcia C."/>
            <person name="Georgescu A.M."/>
            <person name="Glavina T."/>
            <person name="Gomez M."/>
            <person name="Gonzales E."/>
            <person name="Groza M."/>
            <person name="Hammon N."/>
            <person name="Hawkins T."/>
            <person name="Haydu L."/>
            <person name="Ho I."/>
            <person name="Huang W."/>
            <person name="Israni S."/>
            <person name="Jett J."/>
            <person name="Kadner K."/>
            <person name="Kimball H."/>
            <person name="Kobayashi A."/>
            <person name="Larionov V."/>
            <person name="Leem S.-H."/>
            <person name="Lopez F."/>
            <person name="Lou Y."/>
            <person name="Lowry S."/>
            <person name="Malfatti S."/>
            <person name="Martinez D."/>
            <person name="McCready P.M."/>
            <person name="Medina C."/>
            <person name="Morgan J."/>
            <person name="Nelson K."/>
            <person name="Nolan M."/>
            <person name="Ovcharenko I."/>
            <person name="Pitluck S."/>
            <person name="Pollard M."/>
            <person name="Popkie A.P."/>
            <person name="Predki P."/>
            <person name="Quan G."/>
            <person name="Ramirez L."/>
            <person name="Rash S."/>
            <person name="Retterer J."/>
            <person name="Rodriguez A."/>
            <person name="Rogers S."/>
            <person name="Salamov A."/>
            <person name="Salazar A."/>
            <person name="She X."/>
            <person name="Smith D."/>
            <person name="Slezak T."/>
            <person name="Solovyev V."/>
            <person name="Thayer N."/>
            <person name="Tice H."/>
            <person name="Tsai M."/>
            <person name="Ustaszewska A."/>
            <person name="Vo N."/>
            <person name="Wagner M."/>
            <person name="Wheeler J."/>
            <person name="Wu K."/>
            <person name="Xie G."/>
            <person name="Yang J."/>
            <person name="Dubchak I."/>
            <person name="Furey T.S."/>
            <person name="DeJong P."/>
            <person name="Dickson M."/>
            <person name="Gordon D."/>
            <person name="Eichler E.E."/>
            <person name="Pennacchio L.A."/>
            <person name="Richardson P."/>
            <person name="Stubbs L."/>
            <person name="Rokhsar D.S."/>
            <person name="Myers R.M."/>
            <person name="Rubin E.M."/>
            <person name="Lucas S.M."/>
        </authorList>
    </citation>
    <scope>NUCLEOTIDE SEQUENCE [LARGE SCALE GENOMIC DNA]</scope>
</reference>
<reference key="3">
    <citation type="journal article" date="2004" name="Genome Res.">
        <title>The status, quality, and expansion of the NIH full-length cDNA project: the Mammalian Gene Collection (MGC).</title>
        <authorList>
            <consortium name="The MGC Project Team"/>
        </authorList>
    </citation>
    <scope>NUCLEOTIDE SEQUENCE [LARGE SCALE MRNA] (ISOFORM 1)</scope>
    <source>
        <tissue>Muscle</tissue>
    </source>
</reference>
<reference key="4">
    <citation type="journal article" date="2017" name="Nat. Struct. Mol. Biol.">
        <title>Site-specific mapping of the human SUMO proteome reveals co-modification with phosphorylation.</title>
        <authorList>
            <person name="Hendriks I.A."/>
            <person name="Lyon D."/>
            <person name="Young C."/>
            <person name="Jensen L.J."/>
            <person name="Vertegaal A.C."/>
            <person name="Nielsen M.L."/>
        </authorList>
    </citation>
    <scope>SUMOYLATION [LARGE SCALE ANALYSIS] AT LYS-298</scope>
    <scope>IDENTIFICATION BY MASS SPECTROMETRY [LARGE SCALE ANALYSIS]</scope>
</reference>
<comment type="function">
    <text>May be involved in transcriptional regulation.</text>
</comment>
<comment type="interaction">
    <interactant intactId="EBI-3923307">
        <id>Q8TAQ5</id>
    </interactant>
    <interactant intactId="EBI-8643161">
        <id>Q9NX04</id>
        <label>AIRIM</label>
    </interactant>
    <organismsDiffer>false</organismsDiffer>
    <experiments>3</experiments>
</comment>
<comment type="interaction">
    <interactant intactId="EBI-3923307">
        <id>Q8TAQ5</id>
    </interactant>
    <interactant intactId="EBI-625922">
        <id>Q8N726</id>
        <label>CDKN2A</label>
    </interactant>
    <organismsDiffer>false</organismsDiffer>
    <experiments>8</experiments>
</comment>
<comment type="interaction">
    <interactant intactId="EBI-3923307">
        <id>Q8TAQ5</id>
    </interactant>
    <interactant intactId="EBI-741885">
        <id>Q96LK0</id>
        <label>CEP19</label>
    </interactant>
    <organismsDiffer>false</organismsDiffer>
    <experiments>3</experiments>
</comment>
<comment type="interaction">
    <interactant intactId="EBI-3923307">
        <id>Q8TAQ5</id>
    </interactant>
    <interactant intactId="EBI-371876">
        <id>Q9NQT4</id>
        <label>EXOSC5</label>
    </interactant>
    <organismsDiffer>false</organismsDiffer>
    <experiments>3</experiments>
</comment>
<comment type="interaction">
    <interactant intactId="EBI-3923307">
        <id>Q8TAQ5</id>
    </interactant>
    <interactant intactId="EBI-10172290">
        <id>P60409</id>
        <label>KRTAP10-7</label>
    </interactant>
    <organismsDiffer>false</organismsDiffer>
    <experiments>3</experiments>
</comment>
<comment type="interaction">
    <interactant intactId="EBI-3923307">
        <id>Q8TAQ5</id>
    </interactant>
    <interactant intactId="EBI-366083">
        <id>P04637</id>
        <label>TP53</label>
    </interactant>
    <organismsDiffer>false</organismsDiffer>
    <experiments>4</experiments>
</comment>
<comment type="interaction">
    <interactant intactId="EBI-3923307">
        <id>Q8TAQ5</id>
    </interactant>
    <interactant intactId="EBI-7254550">
        <id>P36508</id>
        <label>ZNF76</label>
    </interactant>
    <organismsDiffer>false</organismsDiffer>
    <experiments>3</experiments>
</comment>
<comment type="subcellular location">
    <subcellularLocation>
        <location evidence="4">Nucleus</location>
    </subcellularLocation>
</comment>
<comment type="alternative products">
    <event type="alternative splicing"/>
    <isoform>
        <id>Q8TAQ5-1</id>
        <name>1</name>
        <sequence type="displayed"/>
    </isoform>
    <isoform>
        <id>Q8TAQ5-2</id>
        <name>2</name>
        <sequence type="described" ref="VSP_055951 VSP_055952"/>
    </isoform>
</comment>
<gene>
    <name type="primary">ZNF420</name>
</gene>
<keyword id="KW-0025">Alternative splicing</keyword>
<keyword id="KW-0238">DNA-binding</keyword>
<keyword id="KW-1017">Isopeptide bond</keyword>
<keyword id="KW-0479">Metal-binding</keyword>
<keyword id="KW-0539">Nucleus</keyword>
<keyword id="KW-1267">Proteomics identification</keyword>
<keyword id="KW-1185">Reference proteome</keyword>
<keyword id="KW-0677">Repeat</keyword>
<keyword id="KW-0804">Transcription</keyword>
<keyword id="KW-0805">Transcription regulation</keyword>
<keyword id="KW-0832">Ubl conjugation</keyword>
<keyword id="KW-0862">Zinc</keyword>
<keyword id="KW-0863">Zinc-finger</keyword>
<feature type="chain" id="PRO_0000047575" description="Zinc finger protein 420">
    <location>
        <begin position="1"/>
        <end position="688"/>
    </location>
</feature>
<feature type="domain" description="KRAB" evidence="2">
    <location>
        <begin position="6"/>
        <end position="86"/>
    </location>
</feature>
<feature type="zinc finger region" description="C2H2-type 1" evidence="1">
    <location>
        <begin position="139"/>
        <end position="161"/>
    </location>
</feature>
<feature type="zinc finger region" description="C2H2-type 2" evidence="1">
    <location>
        <begin position="167"/>
        <end position="189"/>
    </location>
</feature>
<feature type="zinc finger region" description="C2H2-type 3" evidence="1">
    <location>
        <begin position="195"/>
        <end position="217"/>
    </location>
</feature>
<feature type="zinc finger region" description="C2H2-type 4" evidence="1">
    <location>
        <begin position="223"/>
        <end position="245"/>
    </location>
</feature>
<feature type="zinc finger region" description="C2H2-type 5" evidence="1">
    <location>
        <begin position="251"/>
        <end position="273"/>
    </location>
</feature>
<feature type="zinc finger region" description="C2H2-type 6" evidence="1">
    <location>
        <begin position="279"/>
        <end position="301"/>
    </location>
</feature>
<feature type="zinc finger region" description="C2H2-type 7" evidence="1">
    <location>
        <begin position="307"/>
        <end position="329"/>
    </location>
</feature>
<feature type="zinc finger region" description="C2H2-type 8" evidence="1">
    <location>
        <begin position="335"/>
        <end position="357"/>
    </location>
</feature>
<feature type="zinc finger region" description="C2H2-type 9" evidence="1">
    <location>
        <begin position="363"/>
        <end position="385"/>
    </location>
</feature>
<feature type="zinc finger region" description="C2H2-type 10" evidence="1">
    <location>
        <begin position="391"/>
        <end position="413"/>
    </location>
</feature>
<feature type="zinc finger region" description="C2H2-type 11" evidence="1">
    <location>
        <begin position="419"/>
        <end position="441"/>
    </location>
</feature>
<feature type="zinc finger region" description="C2H2-type 12" evidence="1">
    <location>
        <begin position="447"/>
        <end position="469"/>
    </location>
</feature>
<feature type="zinc finger region" description="C2H2-type 13" evidence="1">
    <location>
        <begin position="475"/>
        <end position="497"/>
    </location>
</feature>
<feature type="zinc finger region" description="C2H2-type 14" evidence="1">
    <location>
        <begin position="503"/>
        <end position="525"/>
    </location>
</feature>
<feature type="zinc finger region" description="C2H2-type 15" evidence="1">
    <location>
        <begin position="531"/>
        <end position="553"/>
    </location>
</feature>
<feature type="zinc finger region" description="C2H2-type 16" evidence="1">
    <location>
        <begin position="559"/>
        <end position="581"/>
    </location>
</feature>
<feature type="zinc finger region" description="C2H2-type 17" evidence="1">
    <location>
        <begin position="587"/>
        <end position="609"/>
    </location>
</feature>
<feature type="zinc finger region" description="C2H2-type 18" evidence="1">
    <location>
        <begin position="615"/>
        <end position="637"/>
    </location>
</feature>
<feature type="zinc finger region" description="C2H2-type 19" evidence="1">
    <location>
        <begin position="643"/>
        <end position="665"/>
    </location>
</feature>
<feature type="cross-link" description="Glycyl lysine isopeptide (Lys-Gly) (interchain with G-Cter in SUMO2)" evidence="5">
    <location>
        <position position="298"/>
    </location>
</feature>
<feature type="splice variant" id="VSP_055951" description="In isoform 2." evidence="3">
    <original>GEKPYECKECGKSFIRGSQLTQHQRIHTGEKPYECKECRMAFTQSSHLSQHQRLHTGEKPYVCNEC</original>
    <variation>AFLAGQQDRSDIYMSRRFTKSIFPVFFSVPTMWTSKLELRYSHGDFENGIWVLWIMEQKYRRSLQP</variation>
    <location>
        <begin position="471"/>
        <end position="536"/>
    </location>
</feature>
<feature type="splice variant" id="VSP_055952" description="In isoform 2." evidence="3">
    <location>
        <begin position="537"/>
        <end position="688"/>
    </location>
</feature>
<proteinExistence type="evidence at protein level"/>
<protein>
    <recommendedName>
        <fullName>Zinc finger protein 420</fullName>
    </recommendedName>
</protein>
<sequence>MARKLVMFRDVAIDFSQEEWECLDSAQRDLYRDVMLENYSNLVSLDLPSRCASKDLSPEKNTYETELSQWEMSDRLENCDLEESNSRDYLEAKGKMEKQQENQKEYFRQGMIIYDKMSIFNQHTYLSQHSRCHSTEKPYKCKECGKAFRRASHLTQHQSIHTGEKPYECKQCGKAFSRDSQLSLHQRLHTGEKPYACKECGKAFTQSSQLILHHRIHTGEKPYKCEECGKAFIRSSQLTRHQKVHTGEKPYECKECGKAFTQNSQLTLHQRLHTGEKLYECKECRKVFTQLSQLILHKRIHTGEKPYECKECGKAFICGSQLSQHQKIHNGEKPYECKECGRAFIRGSLLMQHQRIHTGEKPYKCEECGKAFIRGSQLTQHQRIHTNEKPYECKECGKMFSHGSQLTQHQRIHTGEKPYQCKECGKAFNRGSLLTRHQRIHTGEKPYECKECGKTFSRGSELTQHERIHTGEKPYECKECGKSFIRGSQLTQHQRIHTGEKPYECKECRMAFTQSSHLSQHQRLHTGEKPYVCNECGKAFARGLLLIQHQRIHTGEKPYQCKECGKAFIRGSQLTQHQRIHTGEKPYECKECGKAFSHGSQLTLHQRIHTGEKPYECRECRKAFTQSSHLSRHQRIHTGEKPYQCKECGKAFTRGSQLTQHQRIHISEKSFEYKECGIDFSHGSQVYM</sequence>
<evidence type="ECO:0000255" key="1">
    <source>
        <dbReference type="PROSITE-ProRule" id="PRU00042"/>
    </source>
</evidence>
<evidence type="ECO:0000255" key="2">
    <source>
        <dbReference type="PROSITE-ProRule" id="PRU00119"/>
    </source>
</evidence>
<evidence type="ECO:0000303" key="3">
    <source>
    </source>
</evidence>
<evidence type="ECO:0000305" key="4"/>
<evidence type="ECO:0007744" key="5">
    <source>
    </source>
</evidence>
<dbReference type="EMBL" id="AK056753">
    <property type="protein sequence ID" value="BAB71272.1"/>
    <property type="molecule type" value="mRNA"/>
</dbReference>
<dbReference type="EMBL" id="AK315728">
    <property type="protein sequence ID" value="BAG38083.1"/>
    <property type="molecule type" value="mRNA"/>
</dbReference>
<dbReference type="EMBL" id="AC008733">
    <property type="status" value="NOT_ANNOTATED_CDS"/>
    <property type="molecule type" value="Genomic_DNA"/>
</dbReference>
<dbReference type="EMBL" id="AC010632">
    <property type="status" value="NOT_ANNOTATED_CDS"/>
    <property type="molecule type" value="Genomic_DNA"/>
</dbReference>
<dbReference type="EMBL" id="AC012309">
    <property type="status" value="NOT_ANNOTATED_CDS"/>
    <property type="molecule type" value="Genomic_DNA"/>
</dbReference>
<dbReference type="EMBL" id="BC026210">
    <property type="protein sequence ID" value="AAH26210.1"/>
    <property type="molecule type" value="mRNA"/>
</dbReference>
<dbReference type="CCDS" id="CCDS12498.1">
    <molecule id="Q8TAQ5-1"/>
</dbReference>
<dbReference type="CCDS" id="CCDS86757.1">
    <molecule id="Q8TAQ5-2"/>
</dbReference>
<dbReference type="RefSeq" id="NP_001316451.1">
    <molecule id="Q8TAQ5-2"/>
    <property type="nucleotide sequence ID" value="NM_001329522.3"/>
</dbReference>
<dbReference type="RefSeq" id="NP_653290.2">
    <molecule id="Q8TAQ5-1"/>
    <property type="nucleotide sequence ID" value="NM_144689.4"/>
</dbReference>
<dbReference type="RefSeq" id="XP_011524805.1">
    <molecule id="Q8TAQ5-1"/>
    <property type="nucleotide sequence ID" value="XM_011526503.3"/>
</dbReference>
<dbReference type="RefSeq" id="XP_011524806.1">
    <molecule id="Q8TAQ5-1"/>
    <property type="nucleotide sequence ID" value="XM_011526504.3"/>
</dbReference>
<dbReference type="RefSeq" id="XP_047294185.1">
    <molecule id="Q8TAQ5-1"/>
    <property type="nucleotide sequence ID" value="XM_047438229.1"/>
</dbReference>
<dbReference type="RefSeq" id="XP_047294186.1">
    <molecule id="Q8TAQ5-1"/>
    <property type="nucleotide sequence ID" value="XM_047438230.1"/>
</dbReference>
<dbReference type="RefSeq" id="XP_054175881.1">
    <molecule id="Q8TAQ5-1"/>
    <property type="nucleotide sequence ID" value="XM_054319906.1"/>
</dbReference>
<dbReference type="RefSeq" id="XP_054175882.1">
    <molecule id="Q8TAQ5-1"/>
    <property type="nucleotide sequence ID" value="XM_054319907.1"/>
</dbReference>
<dbReference type="RefSeq" id="XP_054175883.1">
    <molecule id="Q8TAQ5-1"/>
    <property type="nucleotide sequence ID" value="XM_054319908.1"/>
</dbReference>
<dbReference type="RefSeq" id="XP_054175884.1">
    <molecule id="Q8TAQ5-1"/>
    <property type="nucleotide sequence ID" value="XM_054319909.1"/>
</dbReference>
<dbReference type="SMR" id="Q8TAQ5"/>
<dbReference type="BioGRID" id="127098">
    <property type="interactions" value="38"/>
</dbReference>
<dbReference type="FunCoup" id="Q8TAQ5">
    <property type="interactions" value="595"/>
</dbReference>
<dbReference type="IntAct" id="Q8TAQ5">
    <property type="interactions" value="22"/>
</dbReference>
<dbReference type="MINT" id="Q8TAQ5"/>
<dbReference type="STRING" id="9606.ENSP00000338770"/>
<dbReference type="iPTMnet" id="Q8TAQ5"/>
<dbReference type="PhosphoSitePlus" id="Q8TAQ5"/>
<dbReference type="BioMuta" id="ZNF420"/>
<dbReference type="DMDM" id="71153480"/>
<dbReference type="jPOST" id="Q8TAQ5"/>
<dbReference type="MassIVE" id="Q8TAQ5"/>
<dbReference type="PaxDb" id="9606-ENSP00000338770"/>
<dbReference type="PeptideAtlas" id="Q8TAQ5"/>
<dbReference type="ProteomicsDB" id="73908">
    <molecule id="Q8TAQ5-1"/>
</dbReference>
<dbReference type="ProteomicsDB" id="77371"/>
<dbReference type="Antibodypedia" id="29858">
    <property type="antibodies" value="119 antibodies from 22 providers"/>
</dbReference>
<dbReference type="DNASU" id="147923"/>
<dbReference type="Ensembl" id="ENST00000304239.11">
    <molecule id="Q8TAQ5-2"/>
    <property type="protein sequence ID" value="ENSP00000306102.7"/>
    <property type="gene ID" value="ENSG00000197050.11"/>
</dbReference>
<dbReference type="Ensembl" id="ENST00000337995.4">
    <molecule id="Q8TAQ5-1"/>
    <property type="protein sequence ID" value="ENSP00000338770.2"/>
    <property type="gene ID" value="ENSG00000197050.11"/>
</dbReference>
<dbReference type="GeneID" id="147923"/>
<dbReference type="KEGG" id="hsa:147923"/>
<dbReference type="MANE-Select" id="ENST00000337995.4">
    <property type="protein sequence ID" value="ENSP00000338770.2"/>
    <property type="RefSeq nucleotide sequence ID" value="NM_144689.5"/>
    <property type="RefSeq protein sequence ID" value="NP_653290.2"/>
</dbReference>
<dbReference type="UCSC" id="uc002ofl.4">
    <molecule id="Q8TAQ5-1"/>
    <property type="organism name" value="human"/>
</dbReference>
<dbReference type="AGR" id="HGNC:20649"/>
<dbReference type="CTD" id="147923"/>
<dbReference type="DisGeNET" id="147923"/>
<dbReference type="GeneCards" id="ZNF420"/>
<dbReference type="HGNC" id="HGNC:20649">
    <property type="gene designation" value="ZNF420"/>
</dbReference>
<dbReference type="HPA" id="ENSG00000197050">
    <property type="expression patterns" value="Low tissue specificity"/>
</dbReference>
<dbReference type="neXtProt" id="NX_Q8TAQ5"/>
<dbReference type="OpenTargets" id="ENSG00000197050"/>
<dbReference type="PharmGKB" id="PA134958420"/>
<dbReference type="VEuPathDB" id="HostDB:ENSG00000197050"/>
<dbReference type="eggNOG" id="KOG1721">
    <property type="taxonomic scope" value="Eukaryota"/>
</dbReference>
<dbReference type="GeneTree" id="ENSGT00940000161335"/>
<dbReference type="HOGENOM" id="CLU_002678_44_5_1"/>
<dbReference type="InParanoid" id="Q8TAQ5"/>
<dbReference type="OMA" id="TFEYKEC"/>
<dbReference type="OrthoDB" id="9411774at2759"/>
<dbReference type="PAN-GO" id="Q8TAQ5">
    <property type="GO annotations" value="4 GO annotations based on evolutionary models"/>
</dbReference>
<dbReference type="PhylomeDB" id="Q8TAQ5"/>
<dbReference type="TreeFam" id="TF341817"/>
<dbReference type="PathwayCommons" id="Q8TAQ5"/>
<dbReference type="Reactome" id="R-HSA-212436">
    <property type="pathway name" value="Generic Transcription Pathway"/>
</dbReference>
<dbReference type="Reactome" id="R-HSA-6803204">
    <property type="pathway name" value="TP53 Regulates Transcription of Genes Involved in Cytochrome C Release"/>
</dbReference>
<dbReference type="SignaLink" id="Q8TAQ5"/>
<dbReference type="SIGNOR" id="Q8TAQ5"/>
<dbReference type="BioGRID-ORCS" id="147923">
    <property type="hits" value="10 hits in 1178 CRISPR screens"/>
</dbReference>
<dbReference type="ChiTaRS" id="ZNF420">
    <property type="organism name" value="human"/>
</dbReference>
<dbReference type="GenomeRNAi" id="147923"/>
<dbReference type="Pharos" id="Q8TAQ5">
    <property type="development level" value="Tbio"/>
</dbReference>
<dbReference type="PRO" id="PR:Q8TAQ5"/>
<dbReference type="Proteomes" id="UP000005640">
    <property type="component" value="Chromosome 19"/>
</dbReference>
<dbReference type="RNAct" id="Q8TAQ5">
    <property type="molecule type" value="protein"/>
</dbReference>
<dbReference type="Bgee" id="ENSG00000197050">
    <property type="expression patterns" value="Expressed in middle temporal gyrus and 201 other cell types or tissues"/>
</dbReference>
<dbReference type="ExpressionAtlas" id="Q8TAQ5">
    <property type="expression patterns" value="baseline and differential"/>
</dbReference>
<dbReference type="GO" id="GO:0005654">
    <property type="term" value="C:nucleoplasm"/>
    <property type="evidence" value="ECO:0000304"/>
    <property type="project" value="Reactome"/>
</dbReference>
<dbReference type="GO" id="GO:0005634">
    <property type="term" value="C:nucleus"/>
    <property type="evidence" value="ECO:0000318"/>
    <property type="project" value="GO_Central"/>
</dbReference>
<dbReference type="GO" id="GO:0000981">
    <property type="term" value="F:DNA-binding transcription factor activity, RNA polymerase II-specific"/>
    <property type="evidence" value="ECO:0000318"/>
    <property type="project" value="GO_Central"/>
</dbReference>
<dbReference type="GO" id="GO:0000978">
    <property type="term" value="F:RNA polymerase II cis-regulatory region sequence-specific DNA binding"/>
    <property type="evidence" value="ECO:0000318"/>
    <property type="project" value="GO_Central"/>
</dbReference>
<dbReference type="GO" id="GO:0008270">
    <property type="term" value="F:zinc ion binding"/>
    <property type="evidence" value="ECO:0007669"/>
    <property type="project" value="UniProtKB-KW"/>
</dbReference>
<dbReference type="GO" id="GO:0006357">
    <property type="term" value="P:regulation of transcription by RNA polymerase II"/>
    <property type="evidence" value="ECO:0000318"/>
    <property type="project" value="GO_Central"/>
</dbReference>
<dbReference type="CDD" id="cd07765">
    <property type="entry name" value="KRAB_A-box"/>
    <property type="match status" value="1"/>
</dbReference>
<dbReference type="FunFam" id="3.30.160.60:FF:003025">
    <property type="match status" value="1"/>
</dbReference>
<dbReference type="FunFam" id="3.30.160.60:FF:000020">
    <property type="entry name" value="Zinc finger protein 14 homolog"/>
    <property type="match status" value="2"/>
</dbReference>
<dbReference type="FunFam" id="3.30.160.60:FF:000338">
    <property type="entry name" value="zinc finger protein 383"/>
    <property type="match status" value="1"/>
</dbReference>
<dbReference type="FunFam" id="3.30.160.60:FF:001780">
    <property type="entry name" value="zinc finger protein 420 isoform X1"/>
    <property type="match status" value="1"/>
</dbReference>
<dbReference type="FunFam" id="3.30.160.60:FF:001617">
    <property type="entry name" value="zinc finger protein 420 isoform X2"/>
    <property type="match status" value="1"/>
</dbReference>
<dbReference type="FunFam" id="3.30.160.60:FF:001910">
    <property type="entry name" value="zinc finger protein 420 isoform X3"/>
    <property type="match status" value="1"/>
</dbReference>
<dbReference type="FunFam" id="3.30.160.60:FF:002254">
    <property type="entry name" value="Zinc finger protein 540"/>
    <property type="match status" value="7"/>
</dbReference>
<dbReference type="FunFam" id="3.30.160.60:FF:000737">
    <property type="entry name" value="Zinc finger protein 565"/>
    <property type="match status" value="5"/>
</dbReference>
<dbReference type="Gene3D" id="6.10.140.140">
    <property type="match status" value="1"/>
</dbReference>
<dbReference type="Gene3D" id="3.30.160.60">
    <property type="entry name" value="Classic Zinc Finger"/>
    <property type="match status" value="19"/>
</dbReference>
<dbReference type="InterPro" id="IPR050589">
    <property type="entry name" value="Ikaros_C2H2-ZF"/>
</dbReference>
<dbReference type="InterPro" id="IPR001909">
    <property type="entry name" value="KRAB"/>
</dbReference>
<dbReference type="InterPro" id="IPR036051">
    <property type="entry name" value="KRAB_dom_sf"/>
</dbReference>
<dbReference type="InterPro" id="IPR036236">
    <property type="entry name" value="Znf_C2H2_sf"/>
</dbReference>
<dbReference type="InterPro" id="IPR013087">
    <property type="entry name" value="Znf_C2H2_type"/>
</dbReference>
<dbReference type="PANTHER" id="PTHR24404:SF107">
    <property type="entry name" value="ZFP2 ZINC FINGER PROTEIN"/>
    <property type="match status" value="1"/>
</dbReference>
<dbReference type="PANTHER" id="PTHR24404">
    <property type="entry name" value="ZINC FINGER PROTEIN"/>
    <property type="match status" value="1"/>
</dbReference>
<dbReference type="Pfam" id="PF01352">
    <property type="entry name" value="KRAB"/>
    <property type="match status" value="1"/>
</dbReference>
<dbReference type="Pfam" id="PF00096">
    <property type="entry name" value="zf-C2H2"/>
    <property type="match status" value="16"/>
</dbReference>
<dbReference type="Pfam" id="PF13465">
    <property type="entry name" value="zf-H2C2_2"/>
    <property type="match status" value="1"/>
</dbReference>
<dbReference type="SMART" id="SM00349">
    <property type="entry name" value="KRAB"/>
    <property type="match status" value="1"/>
</dbReference>
<dbReference type="SMART" id="SM00355">
    <property type="entry name" value="ZnF_C2H2"/>
    <property type="match status" value="19"/>
</dbReference>
<dbReference type="SUPFAM" id="SSF57667">
    <property type="entry name" value="beta-beta-alpha zinc fingers"/>
    <property type="match status" value="10"/>
</dbReference>
<dbReference type="SUPFAM" id="SSF109640">
    <property type="entry name" value="KRAB domain (Kruppel-associated box)"/>
    <property type="match status" value="1"/>
</dbReference>
<dbReference type="PROSITE" id="PS50805">
    <property type="entry name" value="KRAB"/>
    <property type="match status" value="1"/>
</dbReference>
<dbReference type="PROSITE" id="PS00028">
    <property type="entry name" value="ZINC_FINGER_C2H2_1"/>
    <property type="match status" value="19"/>
</dbReference>
<dbReference type="PROSITE" id="PS50157">
    <property type="entry name" value="ZINC_FINGER_C2H2_2"/>
    <property type="match status" value="19"/>
</dbReference>
<name>ZN420_HUMAN</name>
<organism>
    <name type="scientific">Homo sapiens</name>
    <name type="common">Human</name>
    <dbReference type="NCBI Taxonomy" id="9606"/>
    <lineage>
        <taxon>Eukaryota</taxon>
        <taxon>Metazoa</taxon>
        <taxon>Chordata</taxon>
        <taxon>Craniata</taxon>
        <taxon>Vertebrata</taxon>
        <taxon>Euteleostomi</taxon>
        <taxon>Mammalia</taxon>
        <taxon>Eutheria</taxon>
        <taxon>Euarchontoglires</taxon>
        <taxon>Primates</taxon>
        <taxon>Haplorrhini</taxon>
        <taxon>Catarrhini</taxon>
        <taxon>Hominidae</taxon>
        <taxon>Homo</taxon>
    </lineage>
</organism>